<proteinExistence type="evidence at transcript level"/>
<feature type="chain" id="PRO_0000123955" description="Farnesyl pyrophosphate synthase">
    <location>
        <begin position="1"/>
        <end position="341"/>
    </location>
</feature>
<feature type="binding site" evidence="2">
    <location>
        <position position="48"/>
    </location>
    <ligand>
        <name>isopentenyl diphosphate</name>
        <dbReference type="ChEBI" id="CHEBI:128769"/>
    </ligand>
</feature>
<feature type="binding site" evidence="2">
    <location>
        <position position="51"/>
    </location>
    <ligand>
        <name>isopentenyl diphosphate</name>
        <dbReference type="ChEBI" id="CHEBI:128769"/>
    </ligand>
</feature>
<feature type="binding site" evidence="2">
    <location>
        <position position="86"/>
    </location>
    <ligand>
        <name>isopentenyl diphosphate</name>
        <dbReference type="ChEBI" id="CHEBI:128769"/>
    </ligand>
</feature>
<feature type="binding site" evidence="2">
    <location>
        <position position="93"/>
    </location>
    <ligand>
        <name>Mg(2+)</name>
        <dbReference type="ChEBI" id="CHEBI:18420"/>
        <label>1</label>
    </ligand>
</feature>
<feature type="binding site" evidence="2">
    <location>
        <position position="93"/>
    </location>
    <ligand>
        <name>Mg(2+)</name>
        <dbReference type="ChEBI" id="CHEBI:18420"/>
        <label>2</label>
    </ligand>
</feature>
<feature type="binding site" evidence="2">
    <location>
        <position position="97"/>
    </location>
    <ligand>
        <name>Mg(2+)</name>
        <dbReference type="ChEBI" id="CHEBI:18420"/>
        <label>1</label>
    </ligand>
</feature>
<feature type="binding site" evidence="2">
    <location>
        <position position="97"/>
    </location>
    <ligand>
        <name>Mg(2+)</name>
        <dbReference type="ChEBI" id="CHEBI:18420"/>
        <label>2</label>
    </ligand>
</feature>
<feature type="binding site" evidence="1">
    <location>
        <position position="102"/>
    </location>
    <ligand>
        <name>dimethylallyl diphosphate</name>
        <dbReference type="ChEBI" id="CHEBI:57623"/>
    </ligand>
</feature>
<feature type="binding site" evidence="2">
    <location>
        <position position="103"/>
    </location>
    <ligand>
        <name>isopentenyl diphosphate</name>
        <dbReference type="ChEBI" id="CHEBI:128769"/>
    </ligand>
</feature>
<feature type="binding site" evidence="1">
    <location>
        <position position="190"/>
    </location>
    <ligand>
        <name>dimethylallyl diphosphate</name>
        <dbReference type="ChEBI" id="CHEBI:57623"/>
    </ligand>
</feature>
<feature type="binding site" evidence="1">
    <location>
        <position position="191"/>
    </location>
    <ligand>
        <name>dimethylallyl diphosphate</name>
        <dbReference type="ChEBI" id="CHEBI:57623"/>
    </ligand>
</feature>
<feature type="binding site" evidence="1">
    <location>
        <position position="229"/>
    </location>
    <ligand>
        <name>dimethylallyl diphosphate</name>
        <dbReference type="ChEBI" id="CHEBI:57623"/>
    </ligand>
</feature>
<feature type="binding site" evidence="1">
    <location>
        <position position="246"/>
    </location>
    <ligand>
        <name>dimethylallyl diphosphate</name>
        <dbReference type="ChEBI" id="CHEBI:57623"/>
    </ligand>
</feature>
<dbReference type="EC" id="2.5.1.10"/>
<dbReference type="EC" id="2.5.1.1"/>
<dbReference type="EMBL" id="AF019892">
    <property type="protein sequence ID" value="AAC78557.1"/>
    <property type="molecule type" value="mRNA"/>
</dbReference>
<dbReference type="SMR" id="O64905"/>
<dbReference type="UniPathway" id="UPA00259">
    <property type="reaction ID" value="UER00368"/>
</dbReference>
<dbReference type="UniPathway" id="UPA00260">
    <property type="reaction ID" value="UER00369"/>
</dbReference>
<dbReference type="GO" id="GO:0005737">
    <property type="term" value="C:cytoplasm"/>
    <property type="evidence" value="ECO:0007669"/>
    <property type="project" value="UniProtKB-SubCell"/>
</dbReference>
<dbReference type="GO" id="GO:0004337">
    <property type="term" value="F:(2E,6E)-farnesyl diphosphate synthase activity"/>
    <property type="evidence" value="ECO:0007669"/>
    <property type="project" value="UniProtKB-EC"/>
</dbReference>
<dbReference type="GO" id="GO:0004161">
    <property type="term" value="F:dimethylallyltranstransferase activity"/>
    <property type="evidence" value="ECO:0007669"/>
    <property type="project" value="UniProtKB-EC"/>
</dbReference>
<dbReference type="GO" id="GO:0046872">
    <property type="term" value="F:metal ion binding"/>
    <property type="evidence" value="ECO:0007669"/>
    <property type="project" value="UniProtKB-KW"/>
</dbReference>
<dbReference type="GO" id="GO:0006695">
    <property type="term" value="P:cholesterol biosynthetic process"/>
    <property type="evidence" value="ECO:0007669"/>
    <property type="project" value="UniProtKB-KW"/>
</dbReference>
<dbReference type="GO" id="GO:0045337">
    <property type="term" value="P:farnesyl diphosphate biosynthetic process"/>
    <property type="evidence" value="ECO:0007669"/>
    <property type="project" value="UniProtKB-UniPathway"/>
</dbReference>
<dbReference type="GO" id="GO:0033384">
    <property type="term" value="P:geranyl diphosphate biosynthetic process"/>
    <property type="evidence" value="ECO:0007669"/>
    <property type="project" value="UniProtKB-UniPathway"/>
</dbReference>
<dbReference type="CDD" id="cd00685">
    <property type="entry name" value="Trans_IPPS_HT"/>
    <property type="match status" value="1"/>
</dbReference>
<dbReference type="FunFam" id="1.10.600.10:FF:000008">
    <property type="entry name" value="Farnesyl pyrophosphate synthase"/>
    <property type="match status" value="1"/>
</dbReference>
<dbReference type="Gene3D" id="1.10.600.10">
    <property type="entry name" value="Farnesyl Diphosphate Synthase"/>
    <property type="match status" value="1"/>
</dbReference>
<dbReference type="InterPro" id="IPR039702">
    <property type="entry name" value="FPS1-like"/>
</dbReference>
<dbReference type="InterPro" id="IPR008949">
    <property type="entry name" value="Isoprenoid_synthase_dom_sf"/>
</dbReference>
<dbReference type="InterPro" id="IPR000092">
    <property type="entry name" value="Polyprenyl_synt"/>
</dbReference>
<dbReference type="InterPro" id="IPR033749">
    <property type="entry name" value="Polyprenyl_synt_CS"/>
</dbReference>
<dbReference type="PANTHER" id="PTHR11525:SF0">
    <property type="entry name" value="FARNESYL PYROPHOSPHATE SYNTHASE"/>
    <property type="match status" value="1"/>
</dbReference>
<dbReference type="PANTHER" id="PTHR11525">
    <property type="entry name" value="FARNESYL-PYROPHOSPHATE SYNTHETASE"/>
    <property type="match status" value="1"/>
</dbReference>
<dbReference type="Pfam" id="PF00348">
    <property type="entry name" value="polyprenyl_synt"/>
    <property type="match status" value="1"/>
</dbReference>
<dbReference type="SFLD" id="SFLDS00005">
    <property type="entry name" value="Isoprenoid_Synthase_Type_I"/>
    <property type="match status" value="1"/>
</dbReference>
<dbReference type="SFLD" id="SFLDG01017">
    <property type="entry name" value="Polyprenyl_Transferase_Like"/>
    <property type="match status" value="1"/>
</dbReference>
<dbReference type="SUPFAM" id="SSF48576">
    <property type="entry name" value="Terpenoid synthases"/>
    <property type="match status" value="1"/>
</dbReference>
<dbReference type="PROSITE" id="PS00723">
    <property type="entry name" value="POLYPRENYL_SYNTHASE_1"/>
    <property type="match status" value="1"/>
</dbReference>
<dbReference type="PROSITE" id="PS00444">
    <property type="entry name" value="POLYPRENYL_SYNTHASE_2"/>
    <property type="match status" value="1"/>
</dbReference>
<reference key="1">
    <citation type="submission" date="1997-08" db="EMBL/GenBank/DDBJ databases">
        <authorList>
            <person name="Park S.C."/>
            <person name="Kim Y.S."/>
            <person name="Oh S.K."/>
            <person name="Shin D.H."/>
            <person name="Chung C.H."/>
            <person name="Han K.H."/>
            <person name="Kang H.S."/>
            <person name="Cho J.W."/>
        </authorList>
    </citation>
    <scope>NUCLEOTIDE SEQUENCE [MRNA]</scope>
</reference>
<comment type="function">
    <text>Catalyzes the sequential condensation of isopentenyl pyrophosphate with the allylic pyrophosphates, dimethylallyl pyrophosphate, and then with the resultant geranylpyrophosphate to the ultimate product farnesyl pyrophosphate.</text>
</comment>
<comment type="catalytic activity">
    <reaction>
        <text>isopentenyl diphosphate + dimethylallyl diphosphate = (2E)-geranyl diphosphate + diphosphate</text>
        <dbReference type="Rhea" id="RHEA:22408"/>
        <dbReference type="ChEBI" id="CHEBI:33019"/>
        <dbReference type="ChEBI" id="CHEBI:57623"/>
        <dbReference type="ChEBI" id="CHEBI:58057"/>
        <dbReference type="ChEBI" id="CHEBI:128769"/>
        <dbReference type="EC" id="2.5.1.1"/>
    </reaction>
</comment>
<comment type="catalytic activity">
    <reaction>
        <text>isopentenyl diphosphate + (2E)-geranyl diphosphate = (2E,6E)-farnesyl diphosphate + diphosphate</text>
        <dbReference type="Rhea" id="RHEA:19361"/>
        <dbReference type="ChEBI" id="CHEBI:33019"/>
        <dbReference type="ChEBI" id="CHEBI:58057"/>
        <dbReference type="ChEBI" id="CHEBI:128769"/>
        <dbReference type="ChEBI" id="CHEBI:175763"/>
        <dbReference type="EC" id="2.5.1.10"/>
    </reaction>
</comment>
<comment type="cofactor">
    <cofactor evidence="1">
        <name>Mg(2+)</name>
        <dbReference type="ChEBI" id="CHEBI:18420"/>
    </cofactor>
    <text evidence="1">Binds 2 Mg(2+) ions per subunit.</text>
</comment>
<comment type="pathway">
    <text>Isoprenoid biosynthesis; farnesyl diphosphate biosynthesis; farnesyl diphosphate from geranyl diphosphate and isopentenyl diphosphate: step 1/1.</text>
</comment>
<comment type="pathway">
    <text>Isoprenoid biosynthesis; geranyl diphosphate biosynthesis; geranyl diphosphate from dimethylallyl diphosphate and isopentenyl diphosphate: step 1/1.</text>
</comment>
<comment type="subcellular location">
    <subcellularLocation>
        <location>Cytoplasm</location>
    </subcellularLocation>
</comment>
<comment type="similarity">
    <text evidence="3">Belongs to the FPP/GGPP synthase family.</text>
</comment>
<accession>O64905</accession>
<evidence type="ECO:0000250" key="1"/>
<evidence type="ECO:0000250" key="2">
    <source>
        <dbReference type="UniProtKB" id="P14324"/>
    </source>
</evidence>
<evidence type="ECO:0000305" key="3"/>
<organism>
    <name type="scientific">Helianthus annuus</name>
    <name type="common">Common sunflower</name>
    <dbReference type="NCBI Taxonomy" id="4232"/>
    <lineage>
        <taxon>Eukaryota</taxon>
        <taxon>Viridiplantae</taxon>
        <taxon>Streptophyta</taxon>
        <taxon>Embryophyta</taxon>
        <taxon>Tracheophyta</taxon>
        <taxon>Spermatophyta</taxon>
        <taxon>Magnoliopsida</taxon>
        <taxon>eudicotyledons</taxon>
        <taxon>Gunneridae</taxon>
        <taxon>Pentapetalae</taxon>
        <taxon>asterids</taxon>
        <taxon>campanulids</taxon>
        <taxon>Asterales</taxon>
        <taxon>Asteraceae</taxon>
        <taxon>Asteroideae</taxon>
        <taxon>Heliantheae alliance</taxon>
        <taxon>Heliantheae</taxon>
        <taxon>Helianthus</taxon>
    </lineage>
</organism>
<protein>
    <recommendedName>
        <fullName>Farnesyl pyrophosphate synthase</fullName>
        <shortName>FPP synthase</shortName>
        <shortName>FPS</shortName>
        <ecNumber>2.5.1.10</ecNumber>
    </recommendedName>
    <alternativeName>
        <fullName>(2E,6E)-farnesyl diphosphate synthase</fullName>
    </alternativeName>
    <alternativeName>
        <fullName>Dimethylallyltranstransferase</fullName>
        <ecNumber>2.5.1.1</ecNumber>
    </alternativeName>
    <alternativeName>
        <fullName>Farnesyl diphosphate synthase</fullName>
    </alternativeName>
    <alternativeName>
        <fullName>Geranyltranstransferase</fullName>
    </alternativeName>
</protein>
<gene>
    <name type="primary">FPS1</name>
    <name type="synonym">FRP</name>
</gene>
<keyword id="KW-0152">Cholesterol biosynthesis</keyword>
<keyword id="KW-0153">Cholesterol metabolism</keyword>
<keyword id="KW-0963">Cytoplasm</keyword>
<keyword id="KW-0414">Isoprene biosynthesis</keyword>
<keyword id="KW-0444">Lipid biosynthesis</keyword>
<keyword id="KW-0443">Lipid metabolism</keyword>
<keyword id="KW-0460">Magnesium</keyword>
<keyword id="KW-0479">Metal-binding</keyword>
<keyword id="KW-0752">Steroid biosynthesis</keyword>
<keyword id="KW-0753">Steroid metabolism</keyword>
<keyword id="KW-0756">Sterol biosynthesis</keyword>
<keyword id="KW-1207">Sterol metabolism</keyword>
<keyword id="KW-0808">Transferase</keyword>
<name>FPPS_HELAN</name>
<sequence length="341" mass="39061">MASDLKSKFLHVYQTLKSELLNDPAFEFHHDSRQWIDKMLDYNVPGGKLNRGLSVVDSYQLLKGAELTDDEIFLASALGWCIEWLQAYFLVLDDIMDGSHTRRGQPCWFRLPKVGMIAANDGLILRNHVPRILKKHFRGKPYYVDLVDLFNEVEFQTASGQMIDLITTLVGEKDLSKYSLSIHRRIVQYKTAYYSFYLPVACALLMFGEDLDNHVEVKNVLVEMGTYFQVQDDYLDCFGAPEVIGKIGTDIEDFSSWLVVKALELANEEQKKVLHENYGKKDPSSVAKVKELYNTLNLQGVFEDYESTSYKKLITSIEGHPSKAVQAVLKSFLGKIYKRQK</sequence>